<protein>
    <recommendedName>
        <fullName>Histone H3</fullName>
    </recommendedName>
</protein>
<evidence type="ECO:0000250" key="1"/>
<evidence type="ECO:0000256" key="2">
    <source>
        <dbReference type="SAM" id="MobiDB-lite"/>
    </source>
</evidence>
<evidence type="ECO:0000305" key="3"/>
<comment type="function">
    <text>Core component of nucleosome. Nucleosomes wrap and compact DNA into chromatin, limiting DNA accessibility to the cellular machineries which require DNA as a template. Histones thereby play a central role in transcription regulation, DNA repair, DNA replication and chromosomal stability. DNA accessibility is regulated via a complex set of post-translational modifications of histones, also called histone code, and nucleosome remodeling.</text>
</comment>
<comment type="subunit">
    <text>The nucleosome is a histone octamer containing two molecules each of H2A, H2B, H3 and H4 assembled in one H3-H4 heterotetramer and two H2A-H2B heterodimers. The octamer wraps approximately 147 bp of DNA.</text>
</comment>
<comment type="subcellular location">
    <subcellularLocation>
        <location evidence="1">Nucleus</location>
    </subcellularLocation>
    <subcellularLocation>
        <location evidence="1">Chromosome</location>
    </subcellularLocation>
</comment>
<comment type="PTM">
    <text evidence="1">Phosphorylated to form H3S10ph. H3S10ph promotes subsequent H3K14ac formation and is required for transcriptional activation through TBP recruitment to the promoters (By similarity).</text>
</comment>
<comment type="PTM">
    <text evidence="1">Mono-, di- and trimethylated by the COMPASS complex to form H3K4me1/2/3. H3K4me activates gene expression by regulating transcription elongation and plays a role in telomere length maintenance. H3K4me enrichment correlates with transcription levels, and occurs in a 5' to 3' gradient with H3K4me3 enrichment at the 5'-end of genes, shifting to H3K4me2 and then H3K4me1. Methylated by SET2 to form H3K36me. H3K36me represses gene expression. Methylated by DOT1 to form H3K79me. H3K79me is required for association of SIR proteins with telomeric regions and for telomeric silencing. The COMPASS-mediated formation of H3K4me2/3 and the DOT1-mediated formation of H3K79me require H2BK123ub1 (By similarity).</text>
</comment>
<comment type="PTM">
    <text evidence="1">Acetylation of histone H3 leads to transcriptional activation. H3K14ac formation by GCN5 is promoted by H3S10ph. H3K14ac can also be formed by ESA1. H3K56ac formation occurs predominantly in newly synthesized H3 molecules during G1, S and G2/M of the cell cycle and may be involved in DNA repair (By similarity).</text>
</comment>
<comment type="similarity">
    <text evidence="3">Belongs to the histone H3 family.</text>
</comment>
<comment type="caution">
    <text evidence="3">To ensure consistency between histone entries, we follow the 'Brno' nomenclature for histone modifications, with positions referring to those used in the literature for the 'closest' model organism. Due to slight variations in histone sequences between organisms and to the presence of initiator methionine in UniProtKB/Swiss-Prot sequences, the actual positions of modified amino acids in the sequence generally differ. In this entry the following conventions are used: H3K4me1/2/3 = mono-, di- and trimethylated Lys-5; H3K9ac = acetylated Lys-10; H3K9me1 = monomethylated Lys-10; H3S10ph = phosphorylated Ser-11; H3K14ac = acetylated Lys-15; H3K14me2 = dimethylated Lys-15; H3K18ac = acetylated Lys-19; H3K18me1 = monomethylated Lys-19; H3K23ac = acetylated Lys-24; H3K23me1 = monomethylated Lys-24; H3K27ac = acetylated Lys-28; H3K27me1/2/3 = mono-, di- and trimethylated Lys-28; H3K36ac = acetylated Lys-37; H3K36me1/2/3 = mono-, di- and trimethylated Lys-37; H3K56ac = acetylated Lys-57; H3K64ac = acetylated Lys-65; H3K79me1/2/3 = mono-, di- and trimethylated Lys-80.</text>
</comment>
<feature type="initiator methionine" description="Removed" evidence="1">
    <location>
        <position position="1"/>
    </location>
</feature>
<feature type="chain" id="PRO_0000221365" description="Histone H3">
    <location>
        <begin position="2"/>
        <end position="136"/>
    </location>
</feature>
<feature type="region of interest" description="Disordered" evidence="2">
    <location>
        <begin position="1"/>
        <end position="43"/>
    </location>
</feature>
<feature type="modified residue" description="N6,N6,N6-trimethyllysine; alternate" evidence="1">
    <location>
        <position position="5"/>
    </location>
</feature>
<feature type="modified residue" description="N6,N6-dimethyllysine; alternate" evidence="1">
    <location>
        <position position="5"/>
    </location>
</feature>
<feature type="modified residue" description="N6-methyllysine; alternate" evidence="1">
    <location>
        <position position="5"/>
    </location>
</feature>
<feature type="modified residue" description="N6-acetyllysine; alternate" evidence="1">
    <location>
        <position position="10"/>
    </location>
</feature>
<feature type="modified residue" description="N6-methyllysine; alternate" evidence="1">
    <location>
        <position position="10"/>
    </location>
</feature>
<feature type="modified residue" description="Phosphoserine" evidence="1">
    <location>
        <position position="11"/>
    </location>
</feature>
<feature type="modified residue" description="N6,N6-dimethyllysine; alternate" evidence="1">
    <location>
        <position position="15"/>
    </location>
</feature>
<feature type="modified residue" description="N6-acetyllysine; alternate" evidence="1">
    <location>
        <position position="15"/>
    </location>
</feature>
<feature type="modified residue" description="N6-methyllysine; alternate" evidence="1">
    <location>
        <position position="15"/>
    </location>
</feature>
<feature type="modified residue" description="N6-acetyllysine; alternate" evidence="1">
    <location>
        <position position="19"/>
    </location>
</feature>
<feature type="modified residue" description="N6-methyllysine; alternate" evidence="1">
    <location>
        <position position="19"/>
    </location>
</feature>
<feature type="modified residue" description="N6-acetyllysine; alternate" evidence="1">
    <location>
        <position position="24"/>
    </location>
</feature>
<feature type="modified residue" description="N6-methyllysine; alternate" evidence="1">
    <location>
        <position position="24"/>
    </location>
</feature>
<feature type="modified residue" description="N6,N6,N6-trimethyllysine; alternate" evidence="1">
    <location>
        <position position="28"/>
    </location>
</feature>
<feature type="modified residue" description="N6,N6-dimethyllysine; alternate" evidence="1">
    <location>
        <position position="28"/>
    </location>
</feature>
<feature type="modified residue" description="N6-acetyllysine; alternate" evidence="1">
    <location>
        <position position="28"/>
    </location>
</feature>
<feature type="modified residue" description="N6-methyllysine; alternate" evidence="1">
    <location>
        <position position="28"/>
    </location>
</feature>
<feature type="modified residue" description="N6,N6,N6-trimethyllysine; alternate" evidence="1">
    <location>
        <position position="37"/>
    </location>
</feature>
<feature type="modified residue" description="N6,N6-dimethyllysine; alternate" evidence="1">
    <location>
        <position position="37"/>
    </location>
</feature>
<feature type="modified residue" description="N6-acetyllysine; alternate" evidence="1">
    <location>
        <position position="37"/>
    </location>
</feature>
<feature type="modified residue" description="N6-methyllysine; alternate" evidence="1">
    <location>
        <position position="37"/>
    </location>
</feature>
<feature type="modified residue" description="N6-acetyllysine" evidence="1">
    <location>
        <position position="57"/>
    </location>
</feature>
<feature type="modified residue" description="N6-acetyllysine" evidence="1">
    <location>
        <position position="65"/>
    </location>
</feature>
<feature type="modified residue" description="N6,N6,N6-trimethyllysine; alternate" evidence="1">
    <location>
        <position position="80"/>
    </location>
</feature>
<feature type="modified residue" description="N6,N6-dimethyllysine; alternate" evidence="1">
    <location>
        <position position="80"/>
    </location>
</feature>
<feature type="modified residue" description="N6-methyllysine; alternate" evidence="1">
    <location>
        <position position="80"/>
    </location>
</feature>
<accession>P61834</accession>
<name>H3_TALFU</name>
<proteinExistence type="inferred from homology"/>
<organism>
    <name type="scientific">Talaromyces funiculosus</name>
    <name type="common">Fruitlet core rot fungus</name>
    <name type="synonym">Penicillium funiculosum</name>
    <dbReference type="NCBI Taxonomy" id="28572"/>
    <lineage>
        <taxon>Eukaryota</taxon>
        <taxon>Fungi</taxon>
        <taxon>Dikarya</taxon>
        <taxon>Ascomycota</taxon>
        <taxon>Pezizomycotina</taxon>
        <taxon>Eurotiomycetes</taxon>
        <taxon>Eurotiomycetidae</taxon>
        <taxon>Eurotiales</taxon>
        <taxon>Trichocomaceae</taxon>
        <taxon>Talaromyces</taxon>
        <taxon>Talaromyces sect. Talaromyces</taxon>
    </lineage>
</organism>
<sequence length="136" mass="15333">MARTKQTARKSTGGKAPRKQLASKAARKAAPSTGGVKKPHRYKPGTVALREIRRYQKSTELLIRKLPFQRLVREIAQDFKSDLRFQSSAIGALQESVEAYLVSLFEDTNLCAIHAKRVTIQSKDIQLARRLRGERS</sequence>
<dbReference type="EMBL" id="AJ314855">
    <property type="protein sequence ID" value="CAC85655.1"/>
    <property type="molecule type" value="Genomic_DNA"/>
</dbReference>
<dbReference type="SMR" id="P61834"/>
<dbReference type="GO" id="GO:0000786">
    <property type="term" value="C:nucleosome"/>
    <property type="evidence" value="ECO:0007669"/>
    <property type="project" value="UniProtKB-KW"/>
</dbReference>
<dbReference type="GO" id="GO:0005634">
    <property type="term" value="C:nucleus"/>
    <property type="evidence" value="ECO:0007669"/>
    <property type="project" value="UniProtKB-SubCell"/>
</dbReference>
<dbReference type="GO" id="GO:0003677">
    <property type="term" value="F:DNA binding"/>
    <property type="evidence" value="ECO:0007669"/>
    <property type="project" value="UniProtKB-KW"/>
</dbReference>
<dbReference type="GO" id="GO:0046982">
    <property type="term" value="F:protein heterodimerization activity"/>
    <property type="evidence" value="ECO:0007669"/>
    <property type="project" value="InterPro"/>
</dbReference>
<dbReference type="GO" id="GO:0030527">
    <property type="term" value="F:structural constituent of chromatin"/>
    <property type="evidence" value="ECO:0007669"/>
    <property type="project" value="InterPro"/>
</dbReference>
<dbReference type="CDD" id="cd22911">
    <property type="entry name" value="HFD_H3"/>
    <property type="match status" value="1"/>
</dbReference>
<dbReference type="FunFam" id="1.10.20.10:FF:000010">
    <property type="entry name" value="Histone H3"/>
    <property type="match status" value="1"/>
</dbReference>
<dbReference type="Gene3D" id="1.10.20.10">
    <property type="entry name" value="Histone, subunit A"/>
    <property type="match status" value="1"/>
</dbReference>
<dbReference type="InterPro" id="IPR009072">
    <property type="entry name" value="Histone-fold"/>
</dbReference>
<dbReference type="InterPro" id="IPR007125">
    <property type="entry name" value="Histone_H2A/H2B/H3"/>
</dbReference>
<dbReference type="InterPro" id="IPR000164">
    <property type="entry name" value="Histone_H3/CENP-A"/>
</dbReference>
<dbReference type="PANTHER" id="PTHR11426">
    <property type="entry name" value="HISTONE H3"/>
    <property type="match status" value="1"/>
</dbReference>
<dbReference type="Pfam" id="PF00125">
    <property type="entry name" value="Histone"/>
    <property type="match status" value="1"/>
</dbReference>
<dbReference type="PRINTS" id="PR00622">
    <property type="entry name" value="HISTONEH3"/>
</dbReference>
<dbReference type="SMART" id="SM00428">
    <property type="entry name" value="H3"/>
    <property type="match status" value="1"/>
</dbReference>
<dbReference type="SUPFAM" id="SSF47113">
    <property type="entry name" value="Histone-fold"/>
    <property type="match status" value="1"/>
</dbReference>
<dbReference type="PROSITE" id="PS00322">
    <property type="entry name" value="HISTONE_H3_1"/>
    <property type="match status" value="1"/>
</dbReference>
<dbReference type="PROSITE" id="PS00959">
    <property type="entry name" value="HISTONE_H3_2"/>
    <property type="match status" value="1"/>
</dbReference>
<keyword id="KW-0007">Acetylation</keyword>
<keyword id="KW-0158">Chromosome</keyword>
<keyword id="KW-0238">DNA-binding</keyword>
<keyword id="KW-0488">Methylation</keyword>
<keyword id="KW-0544">Nucleosome core</keyword>
<keyword id="KW-0539">Nucleus</keyword>
<keyword id="KW-0597">Phosphoprotein</keyword>
<reference key="1">
    <citation type="journal article" date="2002" name="Appl. Microbiol. Biotechnol.">
        <title>Use of a histone H4 promoter to drive expression of homologous and heterologous proteins in Penicillium funiculosum.</title>
        <authorList>
            <person name="Belshaw N.J."/>
            <person name="Haigh N.P."/>
            <person name="Fish N.M."/>
            <person name="Archer D.B."/>
            <person name="Alcocer M.J.C."/>
        </authorList>
    </citation>
    <scope>NUCLEOTIDE SEQUENCE [GENOMIC DNA]</scope>
    <source>
        <strain>IMI 134756</strain>
    </source>
</reference>
<gene>
    <name type="primary">HHT1</name>
</gene>